<gene>
    <name evidence="1" type="primary">rimP</name>
    <name type="ordered locus">NWMN_1175</name>
</gene>
<reference key="1">
    <citation type="journal article" date="2008" name="J. Bacteriol.">
        <title>Genome sequence of Staphylococcus aureus strain Newman and comparative analysis of staphylococcal genomes: polymorphism and evolution of two major pathogenicity islands.</title>
        <authorList>
            <person name="Baba T."/>
            <person name="Bae T."/>
            <person name="Schneewind O."/>
            <person name="Takeuchi F."/>
            <person name="Hiramatsu K."/>
        </authorList>
    </citation>
    <scope>NUCLEOTIDE SEQUENCE [LARGE SCALE GENOMIC DNA]</scope>
    <source>
        <strain>Newman</strain>
    </source>
</reference>
<dbReference type="EMBL" id="AP009351">
    <property type="protein sequence ID" value="BAF67447.1"/>
    <property type="molecule type" value="Genomic_DNA"/>
</dbReference>
<dbReference type="RefSeq" id="WP_000036631.1">
    <property type="nucleotide sequence ID" value="NZ_JBBIAE010000001.1"/>
</dbReference>
<dbReference type="SMR" id="A6QGG5"/>
<dbReference type="KEGG" id="sae:NWMN_1175"/>
<dbReference type="HOGENOM" id="CLU_070525_2_0_9"/>
<dbReference type="Proteomes" id="UP000006386">
    <property type="component" value="Chromosome"/>
</dbReference>
<dbReference type="GO" id="GO:0005829">
    <property type="term" value="C:cytosol"/>
    <property type="evidence" value="ECO:0007669"/>
    <property type="project" value="TreeGrafter"/>
</dbReference>
<dbReference type="GO" id="GO:0000028">
    <property type="term" value="P:ribosomal small subunit assembly"/>
    <property type="evidence" value="ECO:0007669"/>
    <property type="project" value="TreeGrafter"/>
</dbReference>
<dbReference type="GO" id="GO:0006412">
    <property type="term" value="P:translation"/>
    <property type="evidence" value="ECO:0007669"/>
    <property type="project" value="TreeGrafter"/>
</dbReference>
<dbReference type="CDD" id="cd01734">
    <property type="entry name" value="YlxS_C"/>
    <property type="match status" value="1"/>
</dbReference>
<dbReference type="FunFam" id="3.30.300.70:FF:000001">
    <property type="entry name" value="Ribosome maturation factor RimP"/>
    <property type="match status" value="1"/>
</dbReference>
<dbReference type="Gene3D" id="2.30.30.180">
    <property type="entry name" value="Ribosome maturation factor RimP, C-terminal domain"/>
    <property type="match status" value="1"/>
</dbReference>
<dbReference type="Gene3D" id="3.30.300.70">
    <property type="entry name" value="RimP-like superfamily, N-terminal"/>
    <property type="match status" value="1"/>
</dbReference>
<dbReference type="HAMAP" id="MF_01077">
    <property type="entry name" value="RimP"/>
    <property type="match status" value="1"/>
</dbReference>
<dbReference type="InterPro" id="IPR003728">
    <property type="entry name" value="Ribosome_maturation_RimP"/>
</dbReference>
<dbReference type="InterPro" id="IPR028998">
    <property type="entry name" value="RimP_C"/>
</dbReference>
<dbReference type="InterPro" id="IPR036847">
    <property type="entry name" value="RimP_C_sf"/>
</dbReference>
<dbReference type="InterPro" id="IPR028989">
    <property type="entry name" value="RimP_N"/>
</dbReference>
<dbReference type="InterPro" id="IPR035956">
    <property type="entry name" value="RimP_N_sf"/>
</dbReference>
<dbReference type="NCBIfam" id="NF000928">
    <property type="entry name" value="PRK00092.1-2"/>
    <property type="match status" value="1"/>
</dbReference>
<dbReference type="PANTHER" id="PTHR33867">
    <property type="entry name" value="RIBOSOME MATURATION FACTOR RIMP"/>
    <property type="match status" value="1"/>
</dbReference>
<dbReference type="PANTHER" id="PTHR33867:SF1">
    <property type="entry name" value="RIBOSOME MATURATION FACTOR RIMP"/>
    <property type="match status" value="1"/>
</dbReference>
<dbReference type="Pfam" id="PF17384">
    <property type="entry name" value="DUF150_C"/>
    <property type="match status" value="1"/>
</dbReference>
<dbReference type="Pfam" id="PF02576">
    <property type="entry name" value="RimP_N"/>
    <property type="match status" value="1"/>
</dbReference>
<dbReference type="SUPFAM" id="SSF74942">
    <property type="entry name" value="YhbC-like, C-terminal domain"/>
    <property type="match status" value="1"/>
</dbReference>
<dbReference type="SUPFAM" id="SSF75420">
    <property type="entry name" value="YhbC-like, N-terminal domain"/>
    <property type="match status" value="1"/>
</dbReference>
<feature type="chain" id="PRO_1000073022" description="Ribosome maturation factor RimP">
    <location>
        <begin position="1"/>
        <end position="155"/>
    </location>
</feature>
<keyword id="KW-0963">Cytoplasm</keyword>
<keyword id="KW-0690">Ribosome biogenesis</keyword>
<accession>A6QGG5</accession>
<comment type="function">
    <text evidence="1">Required for maturation of 30S ribosomal subunits.</text>
</comment>
<comment type="subcellular location">
    <subcellularLocation>
        <location evidence="1">Cytoplasm</location>
    </subcellularLocation>
</comment>
<comment type="similarity">
    <text evidence="1">Belongs to the RimP family.</text>
</comment>
<protein>
    <recommendedName>
        <fullName evidence="1">Ribosome maturation factor RimP</fullName>
    </recommendedName>
</protein>
<name>RIMP_STAAE</name>
<proteinExistence type="inferred from homology"/>
<organism>
    <name type="scientific">Staphylococcus aureus (strain Newman)</name>
    <dbReference type="NCBI Taxonomy" id="426430"/>
    <lineage>
        <taxon>Bacteria</taxon>
        <taxon>Bacillati</taxon>
        <taxon>Bacillota</taxon>
        <taxon>Bacilli</taxon>
        <taxon>Bacillales</taxon>
        <taxon>Staphylococcaceae</taxon>
        <taxon>Staphylococcus</taxon>
    </lineage>
</organism>
<sequence length="155" mass="17627">MSKITEQVEVIVKPIMEDLNFELVDVEYVKEGRDHFLRISIDKEGGVDLNDCTLASEKISEAMDANDPIPEMYYLDVASPGAERPIKKEQDFQNAITKPVFVSLYVPIEGEKEWLGILQEVNNETIVVQVKIKARTKDIEIPRDKIAKARHAVMI</sequence>
<evidence type="ECO:0000255" key="1">
    <source>
        <dbReference type="HAMAP-Rule" id="MF_01077"/>
    </source>
</evidence>